<sequence length="90" mass="9977">MANTKSAEKRIRANARRALRNKMYRSRVKTAIKKAERAIFAGTPNAELVREAMSLLDRAAVKGIIHKNNAARRKSRLAKKFAKATAASPS</sequence>
<reference key="1">
    <citation type="submission" date="2007-04" db="EMBL/GenBank/DDBJ databases">
        <title>Complete sequence of Roseiflexus sp. RS-1.</title>
        <authorList>
            <consortium name="US DOE Joint Genome Institute"/>
            <person name="Copeland A."/>
            <person name="Lucas S."/>
            <person name="Lapidus A."/>
            <person name="Barry K."/>
            <person name="Detter J.C."/>
            <person name="Glavina del Rio T."/>
            <person name="Hammon N."/>
            <person name="Israni S."/>
            <person name="Dalin E."/>
            <person name="Tice H."/>
            <person name="Pitluck S."/>
            <person name="Chertkov O."/>
            <person name="Brettin T."/>
            <person name="Bruce D."/>
            <person name="Han C."/>
            <person name="Schmutz J."/>
            <person name="Larimer F."/>
            <person name="Land M."/>
            <person name="Hauser L."/>
            <person name="Kyrpides N."/>
            <person name="Mikhailova N."/>
            <person name="Bryant D.A."/>
            <person name="Richardson P."/>
        </authorList>
    </citation>
    <scope>NUCLEOTIDE SEQUENCE [LARGE SCALE GENOMIC DNA]</scope>
    <source>
        <strain>RS-1</strain>
    </source>
</reference>
<accession>A5UXT6</accession>
<gene>
    <name evidence="1" type="primary">rpsT</name>
    <name type="ordered locus">RoseRS_3076</name>
</gene>
<name>RS20_ROSS1</name>
<proteinExistence type="inferred from homology"/>
<protein>
    <recommendedName>
        <fullName evidence="1">Small ribosomal subunit protein bS20</fullName>
    </recommendedName>
    <alternativeName>
        <fullName evidence="2">30S ribosomal protein S20</fullName>
    </alternativeName>
</protein>
<evidence type="ECO:0000255" key="1">
    <source>
        <dbReference type="HAMAP-Rule" id="MF_00500"/>
    </source>
</evidence>
<evidence type="ECO:0000305" key="2"/>
<dbReference type="EMBL" id="CP000686">
    <property type="protein sequence ID" value="ABQ91439.1"/>
    <property type="molecule type" value="Genomic_DNA"/>
</dbReference>
<dbReference type="RefSeq" id="WP_011957783.1">
    <property type="nucleotide sequence ID" value="NC_009523.1"/>
</dbReference>
<dbReference type="SMR" id="A5UXT6"/>
<dbReference type="STRING" id="357808.RoseRS_3076"/>
<dbReference type="KEGG" id="rrs:RoseRS_3076"/>
<dbReference type="eggNOG" id="COG0268">
    <property type="taxonomic scope" value="Bacteria"/>
</dbReference>
<dbReference type="HOGENOM" id="CLU_160655_5_1_0"/>
<dbReference type="OrthoDB" id="9808392at2"/>
<dbReference type="Proteomes" id="UP000006554">
    <property type="component" value="Chromosome"/>
</dbReference>
<dbReference type="GO" id="GO:0005829">
    <property type="term" value="C:cytosol"/>
    <property type="evidence" value="ECO:0007669"/>
    <property type="project" value="TreeGrafter"/>
</dbReference>
<dbReference type="GO" id="GO:0015935">
    <property type="term" value="C:small ribosomal subunit"/>
    <property type="evidence" value="ECO:0007669"/>
    <property type="project" value="TreeGrafter"/>
</dbReference>
<dbReference type="GO" id="GO:0070181">
    <property type="term" value="F:small ribosomal subunit rRNA binding"/>
    <property type="evidence" value="ECO:0007669"/>
    <property type="project" value="TreeGrafter"/>
</dbReference>
<dbReference type="GO" id="GO:0003735">
    <property type="term" value="F:structural constituent of ribosome"/>
    <property type="evidence" value="ECO:0007669"/>
    <property type="project" value="InterPro"/>
</dbReference>
<dbReference type="GO" id="GO:0006412">
    <property type="term" value="P:translation"/>
    <property type="evidence" value="ECO:0007669"/>
    <property type="project" value="UniProtKB-UniRule"/>
</dbReference>
<dbReference type="FunFam" id="1.20.58.110:FF:000001">
    <property type="entry name" value="30S ribosomal protein S20"/>
    <property type="match status" value="1"/>
</dbReference>
<dbReference type="Gene3D" id="1.20.58.110">
    <property type="entry name" value="Ribosomal protein S20"/>
    <property type="match status" value="1"/>
</dbReference>
<dbReference type="HAMAP" id="MF_00500">
    <property type="entry name" value="Ribosomal_bS20"/>
    <property type="match status" value="1"/>
</dbReference>
<dbReference type="InterPro" id="IPR002583">
    <property type="entry name" value="Ribosomal_bS20"/>
</dbReference>
<dbReference type="InterPro" id="IPR036510">
    <property type="entry name" value="Ribosomal_bS20_sf"/>
</dbReference>
<dbReference type="NCBIfam" id="TIGR00029">
    <property type="entry name" value="S20"/>
    <property type="match status" value="1"/>
</dbReference>
<dbReference type="PANTHER" id="PTHR33398">
    <property type="entry name" value="30S RIBOSOMAL PROTEIN S20"/>
    <property type="match status" value="1"/>
</dbReference>
<dbReference type="PANTHER" id="PTHR33398:SF1">
    <property type="entry name" value="SMALL RIBOSOMAL SUBUNIT PROTEIN BS20C"/>
    <property type="match status" value="1"/>
</dbReference>
<dbReference type="Pfam" id="PF01649">
    <property type="entry name" value="Ribosomal_S20p"/>
    <property type="match status" value="1"/>
</dbReference>
<dbReference type="SUPFAM" id="SSF46992">
    <property type="entry name" value="Ribosomal protein S20"/>
    <property type="match status" value="1"/>
</dbReference>
<keyword id="KW-0687">Ribonucleoprotein</keyword>
<keyword id="KW-0689">Ribosomal protein</keyword>
<keyword id="KW-0694">RNA-binding</keyword>
<keyword id="KW-0699">rRNA-binding</keyword>
<organism>
    <name type="scientific">Roseiflexus sp. (strain RS-1)</name>
    <dbReference type="NCBI Taxonomy" id="357808"/>
    <lineage>
        <taxon>Bacteria</taxon>
        <taxon>Bacillati</taxon>
        <taxon>Chloroflexota</taxon>
        <taxon>Chloroflexia</taxon>
        <taxon>Chloroflexales</taxon>
        <taxon>Roseiflexineae</taxon>
        <taxon>Roseiflexaceae</taxon>
        <taxon>Roseiflexus</taxon>
    </lineage>
</organism>
<comment type="function">
    <text evidence="1">Binds directly to 16S ribosomal RNA.</text>
</comment>
<comment type="similarity">
    <text evidence="1">Belongs to the bacterial ribosomal protein bS20 family.</text>
</comment>
<feature type="chain" id="PRO_1000014645" description="Small ribosomal subunit protein bS20">
    <location>
        <begin position="1"/>
        <end position="90"/>
    </location>
</feature>